<sequence>MARRGKKPVVRTLEDLTLDSGYGGAADSVRSSNLSLCCSDSHPASPYGGSCWPPLADSMHSRHNSFDTVNTALVEDSEGLDCAGQHCSRLLPDLDEVPWTLQELEALLLRSRDPRAGPAVPGGLPKDALAKLSTLVSRALVRIAKEAQRLSLRFAKCTKYEIQSAMEIVLSWGLAAHCTAAALAALSLYNMSSAGGDRLGRGKSARCGLTFSVGRVYRWMVDSRVALRIHEHAAIYLTACMESLFRDIYSRVVASGVPRSCSGPGSGSGSGPGPSSGPGAAPAADKEREAPGGGAASGGACSAASSASGGSSCCAPPAAAAAAVPPAAAANHHHHHHHALHEAPKFTVETLEHTVNNDSEIWGLLQPYQHLICGKNASGVLCLPDSLNLHRDPQRSNKPGELPMFSQSELRTIEQSLLATRVGSIAELSDLVSRAMHHLQPLNAKHHGNGTPLHHKQGALYWEPEALYTLCYFMHCPQMEWENPNVEPSKVNLQVERPFLVLPPLMEWIRVAVAHAGHRRSFSMDSDDVRQAARLLLPGVDCEPRQLRADDCFCASRKLDAVAIEAKFKQDLGFRMLNCGRTDLVKQAVSLLGPDGINTMSEQGMTPLMYACVRGDEAMVQMLLDAGADLNVEVVSTPHKYPSVHPETRHWTALTFAVLHGHIPVVQLLLDAGAKVEGSVEHGEENYSETPLQLAAAVGNFELVSLLLERGADPLIGTMYRNGISTTPQGDMNSFSQAAAHGHRNVFRKLLAQPEKEKSDILSLEEILAEGTDLAETAPPPLCASRNSKAKLRALREAMYHSAEHGYVDVTIDIRSIGVPWTLHTWLESLRIAFQQHRRPLIQCLLKEFKTIQEEEYTEELVTQGLPLMFEILKASKNEVISQQLCVIFTHCYGPYPIPKLTEIKRKQTSRLDPHFLNNKEMSDVTFLVEGRPFYAHKVLLFTASPRFKALLSSKPTNDGTCIEIGYVKYSIFQLVMQYLYYGGPESLLIKNNEIMELLSAAKFFQLEALQRHCEIICAKSINTDNCVDIYNHAKFLGVTELSAYCEGYFLKNMMVLIENEAFKQLLYDKNGEGTGQDVLQDLQRTLAIRIQSIHLSSSKGSVV</sequence>
<name>ABTB3_HUMAN</name>
<comment type="subcellular location">
    <subcellularLocation>
        <location evidence="6">Membrane</location>
        <topology evidence="1">Single-pass membrane protein</topology>
    </subcellularLocation>
</comment>
<comment type="alternative products">
    <event type="alternative splicing"/>
    <isoform>
        <id>A6QL63-1</id>
        <name>1</name>
        <sequence type="displayed"/>
    </isoform>
    <isoform>
        <id>A6QL63-2</id>
        <name>2</name>
        <sequence type="described" ref="VSP_032802"/>
    </isoform>
    <isoform>
        <id>A6QL63-3</id>
        <name>3</name>
        <sequence type="described" ref="VSP_032803"/>
    </isoform>
    <isoform>
        <id>A6QL63-4</id>
        <name>4</name>
        <sequence type="described" ref="VSP_032801"/>
    </isoform>
    <isoform>
        <id>A6QL63-5</id>
        <name>5</name>
        <sequence type="described" ref="VSP_045802 VSP_045803"/>
    </isoform>
</comment>
<comment type="induction">
    <text>By all-trans retinoic acid (ATRA).</text>
</comment>
<comment type="sequence caution" evidence="6">
    <conflict type="erroneous initiation">
        <sequence resource="EMBL-CDS" id="AAI01562"/>
    </conflict>
    <text>Truncated N-terminus.</text>
</comment>
<comment type="sequence caution" evidence="6">
    <conflict type="erroneous initiation">
        <sequence resource="EMBL-CDS" id="AAI01564"/>
    </conflict>
    <text>Truncated N-terminus.</text>
</comment>
<comment type="sequence caution" evidence="6">
    <conflict type="miscellaneous discrepancy">
        <sequence resource="EMBL-CDS" id="AAI46825"/>
    </conflict>
    <text>Contaminating sequence. Potential poly-A sequence.</text>
</comment>
<comment type="sequence caution" evidence="6">
    <conflict type="erroneous initiation">
        <sequence resource="EMBL-CDS" id="AAR21078"/>
    </conflict>
    <text>Truncated N-terminus.</text>
</comment>
<comment type="sequence caution" evidence="6">
    <conflict type="erroneous initiation">
        <sequence resource="EMBL-CDS" id="BAC85963"/>
    </conflict>
    <text>Truncated N-terminus.</text>
</comment>
<comment type="sequence caution" evidence="6">
    <conflict type="erroneous gene model prediction">
        <sequence resource="EMBL-CDS" id="EAW97799"/>
    </conflict>
</comment>
<proteinExistence type="evidence at protein level"/>
<keyword id="KW-0025">Alternative splicing</keyword>
<keyword id="KW-0040">ANK repeat</keyword>
<keyword id="KW-0472">Membrane</keyword>
<keyword id="KW-1267">Proteomics identification</keyword>
<keyword id="KW-1185">Reference proteome</keyword>
<keyword id="KW-0677">Repeat</keyword>
<keyword id="KW-0812">Transmembrane</keyword>
<keyword id="KW-1133">Transmembrane helix</keyword>
<dbReference type="EMBL" id="AK091276">
    <property type="protein sequence ID" value="BAC03626.1"/>
    <property type="molecule type" value="mRNA"/>
</dbReference>
<dbReference type="EMBL" id="AK124835">
    <property type="protein sequence ID" value="BAC85963.1"/>
    <property type="status" value="ALT_INIT"/>
    <property type="molecule type" value="mRNA"/>
</dbReference>
<dbReference type="EMBL" id="AK127295">
    <property type="protein sequence ID" value="BAG54475.1"/>
    <property type="molecule type" value="mRNA"/>
</dbReference>
<dbReference type="EMBL" id="AC007540">
    <property type="status" value="NOT_ANNOTATED_CDS"/>
    <property type="molecule type" value="Genomic_DNA"/>
</dbReference>
<dbReference type="EMBL" id="AC007649">
    <property type="status" value="NOT_ANNOTATED_CDS"/>
    <property type="molecule type" value="Genomic_DNA"/>
</dbReference>
<dbReference type="EMBL" id="AC009774">
    <property type="status" value="NOT_ANNOTATED_CDS"/>
    <property type="molecule type" value="Genomic_DNA"/>
</dbReference>
<dbReference type="EMBL" id="CH471054">
    <property type="protein sequence ID" value="EAW97799.1"/>
    <property type="status" value="ALT_SEQ"/>
    <property type="molecule type" value="Genomic_DNA"/>
</dbReference>
<dbReference type="EMBL" id="CH471054">
    <property type="protein sequence ID" value="EAW97800.1"/>
    <property type="molecule type" value="Genomic_DNA"/>
</dbReference>
<dbReference type="EMBL" id="BC093627">
    <property type="protein sequence ID" value="AAH93627.1"/>
    <property type="molecule type" value="mRNA"/>
</dbReference>
<dbReference type="EMBL" id="BC093629">
    <property type="protein sequence ID" value="AAH93629.1"/>
    <property type="molecule type" value="mRNA"/>
</dbReference>
<dbReference type="EMBL" id="BC101561">
    <property type="protein sequence ID" value="AAI01562.1"/>
    <property type="status" value="ALT_INIT"/>
    <property type="molecule type" value="mRNA"/>
</dbReference>
<dbReference type="EMBL" id="BC101563">
    <property type="protein sequence ID" value="AAI01564.1"/>
    <property type="status" value="ALT_INIT"/>
    <property type="molecule type" value="mRNA"/>
</dbReference>
<dbReference type="EMBL" id="BC146824">
    <property type="protein sequence ID" value="AAI46825.1"/>
    <property type="status" value="ALT_SEQ"/>
    <property type="molecule type" value="mRNA"/>
</dbReference>
<dbReference type="EMBL" id="AY373588">
    <property type="protein sequence ID" value="AAR21078.1"/>
    <property type="status" value="ALT_INIT"/>
    <property type="molecule type" value="mRNA"/>
</dbReference>
<dbReference type="CCDS" id="CCDS31893.1">
    <molecule id="A6QL63-1"/>
</dbReference>
<dbReference type="CCDS" id="CCDS41827.1">
    <molecule id="A6QL63-5"/>
</dbReference>
<dbReference type="CCDS" id="CCDS86332.1">
    <molecule id="A6QL63-2"/>
</dbReference>
<dbReference type="RefSeq" id="NP_001017523.1">
    <molecule id="A6QL63-5"/>
    <property type="nucleotide sequence ID" value="NM_001017523.2"/>
</dbReference>
<dbReference type="RefSeq" id="NP_001018082.1">
    <molecule id="A6QL63-1"/>
    <property type="nucleotide sequence ID" value="NM_001018072.2"/>
</dbReference>
<dbReference type="RefSeq" id="NP_001334872.1">
    <molecule id="A6QL63-2"/>
    <property type="nucleotide sequence ID" value="NM_001347943.2"/>
</dbReference>
<dbReference type="SMR" id="A6QL63"/>
<dbReference type="BioGRID" id="125738">
    <property type="interactions" value="9"/>
</dbReference>
<dbReference type="FunCoup" id="A6QL63">
    <property type="interactions" value="171"/>
</dbReference>
<dbReference type="IntAct" id="A6QL63">
    <property type="interactions" value="6"/>
</dbReference>
<dbReference type="STRING" id="9606.ENSP00000280758"/>
<dbReference type="GlyGen" id="A6QL63">
    <property type="glycosylation" value="1 site, 1 O-linked glycan (1 site)"/>
</dbReference>
<dbReference type="iPTMnet" id="A6QL63"/>
<dbReference type="PhosphoSitePlus" id="A6QL63"/>
<dbReference type="BioMuta" id="BTBD11"/>
<dbReference type="jPOST" id="A6QL63"/>
<dbReference type="MassIVE" id="A6QL63"/>
<dbReference type="PaxDb" id="9606-ENSP00000280758"/>
<dbReference type="PeptideAtlas" id="A6QL63"/>
<dbReference type="ProteomicsDB" id="1742">
    <molecule id="A6QL63-1"/>
</dbReference>
<dbReference type="ProteomicsDB" id="1743">
    <molecule id="A6QL63-2"/>
</dbReference>
<dbReference type="ProteomicsDB" id="1744">
    <molecule id="A6QL63-3"/>
</dbReference>
<dbReference type="ProteomicsDB" id="1745">
    <molecule id="A6QL63-4"/>
</dbReference>
<dbReference type="ProteomicsDB" id="20594"/>
<dbReference type="Pumba" id="A6QL63"/>
<dbReference type="Antibodypedia" id="76946">
    <property type="antibodies" value="10 antibodies from 8 providers"/>
</dbReference>
<dbReference type="DNASU" id="121551"/>
<dbReference type="Ensembl" id="ENST00000280758.10">
    <molecule id="A6QL63-1"/>
    <property type="protein sequence ID" value="ENSP00000280758.5"/>
    <property type="gene ID" value="ENSG00000151136.15"/>
</dbReference>
<dbReference type="Ensembl" id="ENST00000357167.8">
    <molecule id="A6QL63-5"/>
    <property type="protein sequence ID" value="ENSP00000349690.4"/>
    <property type="gene ID" value="ENSG00000151136.15"/>
</dbReference>
<dbReference type="Ensembl" id="ENST00000420571.6">
    <molecule id="A6QL63-2"/>
    <property type="protein sequence ID" value="ENSP00000413889.2"/>
    <property type="gene ID" value="ENSG00000151136.15"/>
</dbReference>
<dbReference type="Ensembl" id="ENST00000490090.6">
    <molecule id="A6QL63-3"/>
    <property type="protein sequence ID" value="ENSP00000447319.1"/>
    <property type="gene ID" value="ENSG00000151136.15"/>
</dbReference>
<dbReference type="Ensembl" id="ENST00000494235.2">
    <molecule id="A6QL63-4"/>
    <property type="protein sequence ID" value="ENSP00000448322.1"/>
    <property type="gene ID" value="ENSG00000151136.15"/>
</dbReference>
<dbReference type="GeneID" id="121551"/>
<dbReference type="KEGG" id="hsa:121551"/>
<dbReference type="MANE-Select" id="ENST00000280758.10">
    <property type="protein sequence ID" value="ENSP00000280758.5"/>
    <property type="RefSeq nucleotide sequence ID" value="NM_001018072.2"/>
    <property type="RefSeq protein sequence ID" value="NP_001018082.1"/>
</dbReference>
<dbReference type="UCSC" id="uc001tmj.4">
    <molecule id="A6QL63-1"/>
    <property type="organism name" value="human"/>
</dbReference>
<dbReference type="AGR" id="HGNC:23844"/>
<dbReference type="CTD" id="121551"/>
<dbReference type="DisGeNET" id="121551"/>
<dbReference type="GeneCards" id="ABTB3"/>
<dbReference type="HGNC" id="HGNC:23844">
    <property type="gene designation" value="ABTB3"/>
</dbReference>
<dbReference type="HPA" id="ENSG00000151136">
    <property type="expression patterns" value="Tissue enhanced (esophagus, parathyroid gland)"/>
</dbReference>
<dbReference type="MIM" id="621028">
    <property type="type" value="gene"/>
</dbReference>
<dbReference type="neXtProt" id="NX_A6QL63"/>
<dbReference type="OpenTargets" id="ENSG00000151136"/>
<dbReference type="PharmGKB" id="PA134975180"/>
<dbReference type="VEuPathDB" id="HostDB:ENSG00000151136"/>
<dbReference type="eggNOG" id="ENOG502QSQY">
    <property type="taxonomic scope" value="Eukaryota"/>
</dbReference>
<dbReference type="GeneTree" id="ENSGT00940000156419"/>
<dbReference type="HOGENOM" id="CLU_001918_0_0_1"/>
<dbReference type="InParanoid" id="A6QL63"/>
<dbReference type="OMA" id="NLHREPQ"/>
<dbReference type="OrthoDB" id="6706at9604"/>
<dbReference type="PAN-GO" id="A6QL63">
    <property type="GO annotations" value="1 GO annotation based on evolutionary models"/>
</dbReference>
<dbReference type="PhylomeDB" id="A6QL63"/>
<dbReference type="TreeFam" id="TF106437"/>
<dbReference type="PathwayCommons" id="A6QL63"/>
<dbReference type="SignaLink" id="A6QL63"/>
<dbReference type="BioGRID-ORCS" id="121551">
    <property type="hits" value="13 hits in 1187 CRISPR screens"/>
</dbReference>
<dbReference type="ChiTaRS" id="BTBD11">
    <property type="organism name" value="human"/>
</dbReference>
<dbReference type="GenomeRNAi" id="121551"/>
<dbReference type="Pharos" id="A6QL63">
    <property type="development level" value="Tdark"/>
</dbReference>
<dbReference type="PRO" id="PR:A6QL63"/>
<dbReference type="Proteomes" id="UP000005640">
    <property type="component" value="Chromosome 12"/>
</dbReference>
<dbReference type="RNAct" id="A6QL63">
    <property type="molecule type" value="protein"/>
</dbReference>
<dbReference type="Bgee" id="ENSG00000151136">
    <property type="expression patterns" value="Expressed in lower esophagus mucosa and 147 other cell types or tissues"/>
</dbReference>
<dbReference type="ExpressionAtlas" id="A6QL63">
    <property type="expression patterns" value="baseline and differential"/>
</dbReference>
<dbReference type="GO" id="GO:0098978">
    <property type="term" value="C:glutamatergic synapse"/>
    <property type="evidence" value="ECO:0007669"/>
    <property type="project" value="Ensembl"/>
</dbReference>
<dbReference type="GO" id="GO:0016020">
    <property type="term" value="C:membrane"/>
    <property type="evidence" value="ECO:0007669"/>
    <property type="project" value="UniProtKB-SubCell"/>
</dbReference>
<dbReference type="GO" id="GO:0030165">
    <property type="term" value="F:PDZ domain binding"/>
    <property type="evidence" value="ECO:0007669"/>
    <property type="project" value="Ensembl"/>
</dbReference>
<dbReference type="GO" id="GO:0046982">
    <property type="term" value="F:protein heterodimerization activity"/>
    <property type="evidence" value="ECO:0007669"/>
    <property type="project" value="InterPro"/>
</dbReference>
<dbReference type="GO" id="GO:0035640">
    <property type="term" value="P:exploration behavior"/>
    <property type="evidence" value="ECO:0007669"/>
    <property type="project" value="Ensembl"/>
</dbReference>
<dbReference type="GO" id="GO:0050821">
    <property type="term" value="P:protein stabilization"/>
    <property type="evidence" value="ECO:0007669"/>
    <property type="project" value="Ensembl"/>
</dbReference>
<dbReference type="GO" id="GO:0035249">
    <property type="term" value="P:synaptic transmission, glutamatergic"/>
    <property type="evidence" value="ECO:0007669"/>
    <property type="project" value="Ensembl"/>
</dbReference>
<dbReference type="CDD" id="cd18527">
    <property type="entry name" value="BACK_BTBD11"/>
    <property type="match status" value="1"/>
</dbReference>
<dbReference type="CDD" id="cd18351">
    <property type="entry name" value="BTB_POZ_BTBD11"/>
    <property type="match status" value="1"/>
</dbReference>
<dbReference type="CDD" id="cd22913">
    <property type="entry name" value="HFD_ABTB2-like"/>
    <property type="match status" value="1"/>
</dbReference>
<dbReference type="FunFam" id="1.25.40.20:FF:000045">
    <property type="entry name" value="Ankyrin repeat and BTB/POZ domain-containing protein 2"/>
    <property type="match status" value="1"/>
</dbReference>
<dbReference type="FunFam" id="3.30.710.10:FF:000030">
    <property type="entry name" value="Ankyrin repeat and BTB/POZ domain-containing protein BTBD11"/>
    <property type="match status" value="1"/>
</dbReference>
<dbReference type="FunFam" id="1.10.20.10:FF:000060">
    <property type="entry name" value="BTB domain containing 11"/>
    <property type="match status" value="1"/>
</dbReference>
<dbReference type="Gene3D" id="1.25.40.20">
    <property type="entry name" value="Ankyrin repeat-containing domain"/>
    <property type="match status" value="1"/>
</dbReference>
<dbReference type="Gene3D" id="1.10.20.10">
    <property type="entry name" value="Histone, subunit A"/>
    <property type="match status" value="1"/>
</dbReference>
<dbReference type="Gene3D" id="3.30.710.10">
    <property type="entry name" value="Potassium Channel Kv1.1, Chain A"/>
    <property type="match status" value="1"/>
</dbReference>
<dbReference type="InterPro" id="IPR052089">
    <property type="entry name" value="Ankyrin-BTB/POZ_domain"/>
</dbReference>
<dbReference type="InterPro" id="IPR002110">
    <property type="entry name" value="Ankyrin_rpt"/>
</dbReference>
<dbReference type="InterPro" id="IPR036770">
    <property type="entry name" value="Ankyrin_rpt-contain_sf"/>
</dbReference>
<dbReference type="InterPro" id="IPR000210">
    <property type="entry name" value="BTB/POZ_dom"/>
</dbReference>
<dbReference type="InterPro" id="IPR047824">
    <property type="entry name" value="BTBD11_BACK"/>
</dbReference>
<dbReference type="InterPro" id="IPR009072">
    <property type="entry name" value="Histone-fold"/>
</dbReference>
<dbReference type="InterPro" id="IPR011333">
    <property type="entry name" value="SKP1/BTB/POZ_sf"/>
</dbReference>
<dbReference type="PANTHER" id="PTHR46071">
    <property type="entry name" value="ANKYRIN REPEAT AND BTB/POZ DOMAIN-CONTAINING"/>
    <property type="match status" value="1"/>
</dbReference>
<dbReference type="PANTHER" id="PTHR46071:SF1">
    <property type="entry name" value="ANKYRIN REPEAT AND BTB_POZ DOMAIN-CONTAINING PROTEIN 3"/>
    <property type="match status" value="1"/>
</dbReference>
<dbReference type="Pfam" id="PF00023">
    <property type="entry name" value="Ank"/>
    <property type="match status" value="1"/>
</dbReference>
<dbReference type="Pfam" id="PF12796">
    <property type="entry name" value="Ank_2"/>
    <property type="match status" value="1"/>
</dbReference>
<dbReference type="Pfam" id="PF00651">
    <property type="entry name" value="BTB"/>
    <property type="match status" value="1"/>
</dbReference>
<dbReference type="SMART" id="SM00248">
    <property type="entry name" value="ANK"/>
    <property type="match status" value="4"/>
</dbReference>
<dbReference type="SMART" id="SM00225">
    <property type="entry name" value="BTB"/>
    <property type="match status" value="1"/>
</dbReference>
<dbReference type="SUPFAM" id="SSF48403">
    <property type="entry name" value="Ankyrin repeat"/>
    <property type="match status" value="1"/>
</dbReference>
<dbReference type="SUPFAM" id="SSF47113">
    <property type="entry name" value="Histone-fold"/>
    <property type="match status" value="2"/>
</dbReference>
<dbReference type="SUPFAM" id="SSF54695">
    <property type="entry name" value="POZ domain"/>
    <property type="match status" value="1"/>
</dbReference>
<dbReference type="PROSITE" id="PS50297">
    <property type="entry name" value="ANK_REP_REGION"/>
    <property type="match status" value="1"/>
</dbReference>
<dbReference type="PROSITE" id="PS50088">
    <property type="entry name" value="ANK_REPEAT"/>
    <property type="match status" value="3"/>
</dbReference>
<dbReference type="PROSITE" id="PS50097">
    <property type="entry name" value="BTB"/>
    <property type="match status" value="1"/>
</dbReference>
<reference key="1">
    <citation type="journal article" date="2004" name="Nat. Genet.">
        <title>Complete sequencing and characterization of 21,243 full-length human cDNAs.</title>
        <authorList>
            <person name="Ota T."/>
            <person name="Suzuki Y."/>
            <person name="Nishikawa T."/>
            <person name="Otsuki T."/>
            <person name="Sugiyama T."/>
            <person name="Irie R."/>
            <person name="Wakamatsu A."/>
            <person name="Hayashi K."/>
            <person name="Sato H."/>
            <person name="Nagai K."/>
            <person name="Kimura K."/>
            <person name="Makita H."/>
            <person name="Sekine M."/>
            <person name="Obayashi M."/>
            <person name="Nishi T."/>
            <person name="Shibahara T."/>
            <person name="Tanaka T."/>
            <person name="Ishii S."/>
            <person name="Yamamoto J."/>
            <person name="Saito K."/>
            <person name="Kawai Y."/>
            <person name="Isono Y."/>
            <person name="Nakamura Y."/>
            <person name="Nagahari K."/>
            <person name="Murakami K."/>
            <person name="Yasuda T."/>
            <person name="Iwayanagi T."/>
            <person name="Wagatsuma M."/>
            <person name="Shiratori A."/>
            <person name="Sudo H."/>
            <person name="Hosoiri T."/>
            <person name="Kaku Y."/>
            <person name="Kodaira H."/>
            <person name="Kondo H."/>
            <person name="Sugawara M."/>
            <person name="Takahashi M."/>
            <person name="Kanda K."/>
            <person name="Yokoi T."/>
            <person name="Furuya T."/>
            <person name="Kikkawa E."/>
            <person name="Omura Y."/>
            <person name="Abe K."/>
            <person name="Kamihara K."/>
            <person name="Katsuta N."/>
            <person name="Sato K."/>
            <person name="Tanikawa M."/>
            <person name="Yamazaki M."/>
            <person name="Ninomiya K."/>
            <person name="Ishibashi T."/>
            <person name="Yamashita H."/>
            <person name="Murakawa K."/>
            <person name="Fujimori K."/>
            <person name="Tanai H."/>
            <person name="Kimata M."/>
            <person name="Watanabe M."/>
            <person name="Hiraoka S."/>
            <person name="Chiba Y."/>
            <person name="Ishida S."/>
            <person name="Ono Y."/>
            <person name="Takiguchi S."/>
            <person name="Watanabe S."/>
            <person name="Yosida M."/>
            <person name="Hotuta T."/>
            <person name="Kusano J."/>
            <person name="Kanehori K."/>
            <person name="Takahashi-Fujii A."/>
            <person name="Hara H."/>
            <person name="Tanase T.-O."/>
            <person name="Nomura Y."/>
            <person name="Togiya S."/>
            <person name="Komai F."/>
            <person name="Hara R."/>
            <person name="Takeuchi K."/>
            <person name="Arita M."/>
            <person name="Imose N."/>
            <person name="Musashino K."/>
            <person name="Yuuki H."/>
            <person name="Oshima A."/>
            <person name="Sasaki N."/>
            <person name="Aotsuka S."/>
            <person name="Yoshikawa Y."/>
            <person name="Matsunawa H."/>
            <person name="Ichihara T."/>
            <person name="Shiohata N."/>
            <person name="Sano S."/>
            <person name="Moriya S."/>
            <person name="Momiyama H."/>
            <person name="Satoh N."/>
            <person name="Takami S."/>
            <person name="Terashima Y."/>
            <person name="Suzuki O."/>
            <person name="Nakagawa S."/>
            <person name="Senoh A."/>
            <person name="Mizoguchi H."/>
            <person name="Goto Y."/>
            <person name="Shimizu F."/>
            <person name="Wakebe H."/>
            <person name="Hishigaki H."/>
            <person name="Watanabe T."/>
            <person name="Sugiyama A."/>
            <person name="Takemoto M."/>
            <person name="Kawakami B."/>
            <person name="Yamazaki M."/>
            <person name="Watanabe K."/>
            <person name="Kumagai A."/>
            <person name="Itakura S."/>
            <person name="Fukuzumi Y."/>
            <person name="Fujimori Y."/>
            <person name="Komiyama M."/>
            <person name="Tashiro H."/>
            <person name="Tanigami A."/>
            <person name="Fujiwara T."/>
            <person name="Ono T."/>
            <person name="Yamada K."/>
            <person name="Fujii Y."/>
            <person name="Ozaki K."/>
            <person name="Hirao M."/>
            <person name="Ohmori Y."/>
            <person name="Kawabata A."/>
            <person name="Hikiji T."/>
            <person name="Kobatake N."/>
            <person name="Inagaki H."/>
            <person name="Ikema Y."/>
            <person name="Okamoto S."/>
            <person name="Okitani R."/>
            <person name="Kawakami T."/>
            <person name="Noguchi S."/>
            <person name="Itoh T."/>
            <person name="Shigeta K."/>
            <person name="Senba T."/>
            <person name="Matsumura K."/>
            <person name="Nakajima Y."/>
            <person name="Mizuno T."/>
            <person name="Morinaga M."/>
            <person name="Sasaki M."/>
            <person name="Togashi T."/>
            <person name="Oyama M."/>
            <person name="Hata H."/>
            <person name="Watanabe M."/>
            <person name="Komatsu T."/>
            <person name="Mizushima-Sugano J."/>
            <person name="Satoh T."/>
            <person name="Shirai Y."/>
            <person name="Takahashi Y."/>
            <person name="Nakagawa K."/>
            <person name="Okumura K."/>
            <person name="Nagase T."/>
            <person name="Nomura N."/>
            <person name="Kikuchi H."/>
            <person name="Masuho Y."/>
            <person name="Yamashita R."/>
            <person name="Nakai K."/>
            <person name="Yada T."/>
            <person name="Nakamura Y."/>
            <person name="Ohara O."/>
            <person name="Isogai T."/>
            <person name="Sugano S."/>
        </authorList>
    </citation>
    <scope>NUCLEOTIDE SEQUENCE [LARGE SCALE MRNA] (ISOFORMS 4 AND 5)</scope>
    <scope>NUCLEOTIDE SEQUENCE [LARGE SCALE MRNA] OF 338-1104 (ISOFORM 3)</scope>
    <source>
        <tissue>Hippocampus</tissue>
        <tissue>Tongue</tissue>
    </source>
</reference>
<reference key="2">
    <citation type="journal article" date="2006" name="Nature">
        <title>The finished DNA sequence of human chromosome 12.</title>
        <authorList>
            <person name="Scherer S.E."/>
            <person name="Muzny D.M."/>
            <person name="Buhay C.J."/>
            <person name="Chen R."/>
            <person name="Cree A."/>
            <person name="Ding Y."/>
            <person name="Dugan-Rocha S."/>
            <person name="Gill R."/>
            <person name="Gunaratne P."/>
            <person name="Harris R.A."/>
            <person name="Hawes A.C."/>
            <person name="Hernandez J."/>
            <person name="Hodgson A.V."/>
            <person name="Hume J."/>
            <person name="Jackson A."/>
            <person name="Khan Z.M."/>
            <person name="Kovar-Smith C."/>
            <person name="Lewis L.R."/>
            <person name="Lozado R.J."/>
            <person name="Metzker M.L."/>
            <person name="Milosavljevic A."/>
            <person name="Miner G.R."/>
            <person name="Montgomery K.T."/>
            <person name="Morgan M.B."/>
            <person name="Nazareth L.V."/>
            <person name="Scott G."/>
            <person name="Sodergren E."/>
            <person name="Song X.-Z."/>
            <person name="Steffen D."/>
            <person name="Lovering R.C."/>
            <person name="Wheeler D.A."/>
            <person name="Worley K.C."/>
            <person name="Yuan Y."/>
            <person name="Zhang Z."/>
            <person name="Adams C.Q."/>
            <person name="Ansari-Lari M.A."/>
            <person name="Ayele M."/>
            <person name="Brown M.J."/>
            <person name="Chen G."/>
            <person name="Chen Z."/>
            <person name="Clerc-Blankenburg K.P."/>
            <person name="Davis C."/>
            <person name="Delgado O."/>
            <person name="Dinh H.H."/>
            <person name="Draper H."/>
            <person name="Gonzalez-Garay M.L."/>
            <person name="Havlak P."/>
            <person name="Jackson L.R."/>
            <person name="Jacob L.S."/>
            <person name="Kelly S.H."/>
            <person name="Li L."/>
            <person name="Li Z."/>
            <person name="Liu J."/>
            <person name="Liu W."/>
            <person name="Lu J."/>
            <person name="Maheshwari M."/>
            <person name="Nguyen B.-V."/>
            <person name="Okwuonu G.O."/>
            <person name="Pasternak S."/>
            <person name="Perez L.M."/>
            <person name="Plopper F.J.H."/>
            <person name="Santibanez J."/>
            <person name="Shen H."/>
            <person name="Tabor P.E."/>
            <person name="Verduzco D."/>
            <person name="Waldron L."/>
            <person name="Wang Q."/>
            <person name="Williams G.A."/>
            <person name="Zhang J."/>
            <person name="Zhou J."/>
            <person name="Allen C.C."/>
            <person name="Amin A.G."/>
            <person name="Anyalebechi V."/>
            <person name="Bailey M."/>
            <person name="Barbaria J.A."/>
            <person name="Bimage K.E."/>
            <person name="Bryant N.P."/>
            <person name="Burch P.E."/>
            <person name="Burkett C.E."/>
            <person name="Burrell K.L."/>
            <person name="Calderon E."/>
            <person name="Cardenas V."/>
            <person name="Carter K."/>
            <person name="Casias K."/>
            <person name="Cavazos I."/>
            <person name="Cavazos S.R."/>
            <person name="Ceasar H."/>
            <person name="Chacko J."/>
            <person name="Chan S.N."/>
            <person name="Chavez D."/>
            <person name="Christopoulos C."/>
            <person name="Chu J."/>
            <person name="Cockrell R."/>
            <person name="Cox C.D."/>
            <person name="Dang M."/>
            <person name="Dathorne S.R."/>
            <person name="David R."/>
            <person name="Davis C.M."/>
            <person name="Davy-Carroll L."/>
            <person name="Deshazo D.R."/>
            <person name="Donlin J.E."/>
            <person name="D'Souza L."/>
            <person name="Eaves K.A."/>
            <person name="Egan A."/>
            <person name="Emery-Cohen A.J."/>
            <person name="Escotto M."/>
            <person name="Flagg N."/>
            <person name="Forbes L.D."/>
            <person name="Gabisi A.M."/>
            <person name="Garza M."/>
            <person name="Hamilton C."/>
            <person name="Henderson N."/>
            <person name="Hernandez O."/>
            <person name="Hines S."/>
            <person name="Hogues M.E."/>
            <person name="Huang M."/>
            <person name="Idlebird D.G."/>
            <person name="Johnson R."/>
            <person name="Jolivet A."/>
            <person name="Jones S."/>
            <person name="Kagan R."/>
            <person name="King L.M."/>
            <person name="Leal B."/>
            <person name="Lebow H."/>
            <person name="Lee S."/>
            <person name="LeVan J.M."/>
            <person name="Lewis L.C."/>
            <person name="London P."/>
            <person name="Lorensuhewa L.M."/>
            <person name="Loulseged H."/>
            <person name="Lovett D.A."/>
            <person name="Lucier A."/>
            <person name="Lucier R.L."/>
            <person name="Ma J."/>
            <person name="Madu R.C."/>
            <person name="Mapua P."/>
            <person name="Martindale A.D."/>
            <person name="Martinez E."/>
            <person name="Massey E."/>
            <person name="Mawhiney S."/>
            <person name="Meador M.G."/>
            <person name="Mendez S."/>
            <person name="Mercado C."/>
            <person name="Mercado I.C."/>
            <person name="Merritt C.E."/>
            <person name="Miner Z.L."/>
            <person name="Minja E."/>
            <person name="Mitchell T."/>
            <person name="Mohabbat F."/>
            <person name="Mohabbat K."/>
            <person name="Montgomery B."/>
            <person name="Moore N."/>
            <person name="Morris S."/>
            <person name="Munidasa M."/>
            <person name="Ngo R.N."/>
            <person name="Nguyen N.B."/>
            <person name="Nickerson E."/>
            <person name="Nwaokelemeh O.O."/>
            <person name="Nwokenkwo S."/>
            <person name="Obregon M."/>
            <person name="Oguh M."/>
            <person name="Oragunye N."/>
            <person name="Oviedo R.J."/>
            <person name="Parish B.J."/>
            <person name="Parker D.N."/>
            <person name="Parrish J."/>
            <person name="Parks K.L."/>
            <person name="Paul H.A."/>
            <person name="Payton B.A."/>
            <person name="Perez A."/>
            <person name="Perrin W."/>
            <person name="Pickens A."/>
            <person name="Primus E.L."/>
            <person name="Pu L.-L."/>
            <person name="Puazo M."/>
            <person name="Quiles M.M."/>
            <person name="Quiroz J.B."/>
            <person name="Rabata D."/>
            <person name="Reeves K."/>
            <person name="Ruiz S.J."/>
            <person name="Shao H."/>
            <person name="Sisson I."/>
            <person name="Sonaike T."/>
            <person name="Sorelle R.P."/>
            <person name="Sutton A.E."/>
            <person name="Svatek A.F."/>
            <person name="Svetz L.A."/>
            <person name="Tamerisa K.S."/>
            <person name="Taylor T.R."/>
            <person name="Teague B."/>
            <person name="Thomas N."/>
            <person name="Thorn R.D."/>
            <person name="Trejos Z.Y."/>
            <person name="Trevino B.K."/>
            <person name="Ukegbu O.N."/>
            <person name="Urban J.B."/>
            <person name="Vasquez L.I."/>
            <person name="Vera V.A."/>
            <person name="Villasana D.M."/>
            <person name="Wang L."/>
            <person name="Ward-Moore S."/>
            <person name="Warren J.T."/>
            <person name="Wei X."/>
            <person name="White F."/>
            <person name="Williamson A.L."/>
            <person name="Wleczyk R."/>
            <person name="Wooden H.S."/>
            <person name="Wooden S.H."/>
            <person name="Yen J."/>
            <person name="Yoon L."/>
            <person name="Yoon V."/>
            <person name="Zorrilla S.E."/>
            <person name="Nelson D."/>
            <person name="Kucherlapati R."/>
            <person name="Weinstock G."/>
            <person name="Gibbs R.A."/>
        </authorList>
    </citation>
    <scope>NUCLEOTIDE SEQUENCE [LARGE SCALE GENOMIC DNA]</scope>
</reference>
<reference key="3">
    <citation type="submission" date="2005-07" db="EMBL/GenBank/DDBJ databases">
        <authorList>
            <person name="Mural R.J."/>
            <person name="Istrail S."/>
            <person name="Sutton G.G."/>
            <person name="Florea L."/>
            <person name="Halpern A.L."/>
            <person name="Mobarry C.M."/>
            <person name="Lippert R."/>
            <person name="Walenz B."/>
            <person name="Shatkay H."/>
            <person name="Dew I."/>
            <person name="Miller J.R."/>
            <person name="Flanigan M.J."/>
            <person name="Edwards N.J."/>
            <person name="Bolanos R."/>
            <person name="Fasulo D."/>
            <person name="Halldorsson B.V."/>
            <person name="Hannenhalli S."/>
            <person name="Turner R."/>
            <person name="Yooseph S."/>
            <person name="Lu F."/>
            <person name="Nusskern D.R."/>
            <person name="Shue B.C."/>
            <person name="Zheng X.H."/>
            <person name="Zhong F."/>
            <person name="Delcher A.L."/>
            <person name="Huson D.H."/>
            <person name="Kravitz S.A."/>
            <person name="Mouchard L."/>
            <person name="Reinert K."/>
            <person name="Remington K.A."/>
            <person name="Clark A.G."/>
            <person name="Waterman M.S."/>
            <person name="Eichler E.E."/>
            <person name="Adams M.D."/>
            <person name="Hunkapiller M.W."/>
            <person name="Myers E.W."/>
            <person name="Venter J.C."/>
        </authorList>
    </citation>
    <scope>NUCLEOTIDE SEQUENCE [LARGE SCALE GENOMIC DNA]</scope>
</reference>
<reference key="4">
    <citation type="journal article" date="2004" name="Genome Res.">
        <title>The status, quality, and expansion of the NIH full-length cDNA project: the Mammalian Gene Collection (MGC).</title>
        <authorList>
            <consortium name="The MGC Project Team"/>
        </authorList>
    </citation>
    <scope>NUCLEOTIDE SEQUENCE [LARGE SCALE MRNA] (ISOFORM 2)</scope>
    <source>
        <tissue>Brain</tissue>
    </source>
</reference>
<reference key="5">
    <citation type="submission" date="2003-08" db="EMBL/GenBank/DDBJ databases">
        <title>Characterization of a novel gene containing ANK repeats and BTB domain.</title>
        <authorList>
            <person name="Xu J."/>
            <person name="Xie Y."/>
            <person name="Mao Y."/>
        </authorList>
    </citation>
    <scope>NUCLEOTIDE SEQUENCE [MRNA] OF 550-1104 (ISOFORM 1)</scope>
</reference>
<accession>A6QL63</accession>
<accession>A4FU41</accession>
<accession>B3KXG3</accession>
<accession>C9J019</accession>
<accession>C9JK80</accession>
<accession>E9PHS4</accession>
<accession>Q3ZTQ4</accession>
<accession>Q52M89</accession>
<accession>Q6ZV99</accession>
<accession>Q8N245</accession>
<organism>
    <name type="scientific">Homo sapiens</name>
    <name type="common">Human</name>
    <dbReference type="NCBI Taxonomy" id="9606"/>
    <lineage>
        <taxon>Eukaryota</taxon>
        <taxon>Metazoa</taxon>
        <taxon>Chordata</taxon>
        <taxon>Craniata</taxon>
        <taxon>Vertebrata</taxon>
        <taxon>Euteleostomi</taxon>
        <taxon>Mammalia</taxon>
        <taxon>Eutheria</taxon>
        <taxon>Euarchontoglires</taxon>
        <taxon>Primates</taxon>
        <taxon>Haplorrhini</taxon>
        <taxon>Catarrhini</taxon>
        <taxon>Hominidae</taxon>
        <taxon>Homo</taxon>
    </lineage>
</organism>
<protein>
    <recommendedName>
        <fullName>Ankyrin repeat- and BTB/POZ domain-containing protein 3</fullName>
    </recommendedName>
    <alternativeName>
        <fullName>BTB/POZ domain-containing protein 11</fullName>
    </alternativeName>
</protein>
<feature type="chain" id="PRO_0000328827" description="Ankyrin repeat- and BTB/POZ domain-containing protein 3">
    <location>
        <begin position="1"/>
        <end position="1104"/>
    </location>
</feature>
<feature type="transmembrane region" description="Helical" evidence="1">
    <location>
        <begin position="168"/>
        <end position="188"/>
    </location>
</feature>
<feature type="repeat" description="ANK 1" evidence="1">
    <location>
        <begin position="603"/>
        <end position="632"/>
    </location>
</feature>
<feature type="repeat" description="ANK 2" evidence="1">
    <location>
        <begin position="649"/>
        <end position="678"/>
    </location>
</feature>
<feature type="repeat" description="ANK 3" evidence="1">
    <location>
        <begin position="687"/>
        <end position="716"/>
    </location>
</feature>
<feature type="repeat" description="ANK 4" evidence="1">
    <location>
        <begin position="730"/>
        <end position="759"/>
    </location>
</feature>
<feature type="repeat" description="ANK 5" evidence="1">
    <location>
        <begin position="825"/>
        <end position="854"/>
    </location>
</feature>
<feature type="domain" description="BTB" evidence="2">
    <location>
        <begin position="923"/>
        <end position="989"/>
    </location>
</feature>
<feature type="region of interest" description="Disordered" evidence="3">
    <location>
        <begin position="260"/>
        <end position="301"/>
    </location>
</feature>
<feature type="compositionally biased region" description="Gly residues" evidence="3">
    <location>
        <begin position="264"/>
        <end position="276"/>
    </location>
</feature>
<feature type="splice variant" id="VSP_032801" description="In isoform 4." evidence="4">
    <location>
        <begin position="1"/>
        <end position="921"/>
    </location>
</feature>
<feature type="splice variant" id="VSP_045802" description="In isoform 5." evidence="4">
    <original>MARRGKKPVVRTLEDLTLDSGYGGAADSVRSSN</original>
    <variation>MRKLRPKDSREPAPGSPVRSGCLQRLSHYSGIQ</variation>
    <location>
        <begin position="1"/>
        <end position="33"/>
    </location>
</feature>
<feature type="splice variant" id="VSP_045803" description="In isoform 5." evidence="4">
    <location>
        <begin position="34"/>
        <end position="496"/>
    </location>
</feature>
<feature type="splice variant" id="VSP_032802" description="In isoform 2." evidence="5">
    <location>
        <begin position="699"/>
        <end position="817"/>
    </location>
</feature>
<feature type="splice variant" id="VSP_032803" description="In isoform 3." evidence="4">
    <original>LLSAAKFFQLEALQRHCEIICAKSINTDNCVDIYNHAKFLGVTELSAYCEGYFLKNMMVLIENEAFKQLLYDKNGEGTGQDVLQDLQRTLAIRIQSIHLSSSKGSVV</original>
    <variation>VRDPLWCWLS</variation>
    <location>
        <begin position="998"/>
        <end position="1104"/>
    </location>
</feature>
<feature type="sequence variant" id="VAR_055560" description="In dbSNP:rs1558781.">
    <original>G</original>
    <variation>S</variation>
    <location>
        <position position="448"/>
    </location>
</feature>
<feature type="sequence variant" id="VAR_042534" description="In dbSNP:rs11610050.">
    <original>A</original>
    <variation>D</variation>
    <location>
        <position position="1002"/>
    </location>
</feature>
<feature type="sequence variant" id="VAR_042535" description="In dbSNP:rs12303478.">
    <original>G</original>
    <variation>S</variation>
    <location>
        <position position="1076"/>
    </location>
</feature>
<feature type="sequence conflict" description="In Ref. 4; AAI46825." evidence="6" ref="4">
    <original>R</original>
    <variation>H</variation>
    <location>
        <position position="224"/>
    </location>
</feature>
<feature type="sequence conflict" description="In Ref. 1; BAC85963." evidence="6" ref="1">
    <original>I</original>
    <variation>V</variation>
    <location>
        <position position="361"/>
    </location>
</feature>
<feature type="sequence conflict" description="In Ref. 1; BAG54475." evidence="6" ref="1">
    <original>A</original>
    <variation>V</variation>
    <location>
        <position position="653"/>
    </location>
</feature>
<feature type="sequence conflict" description="In Ref. 1; BAC03626." evidence="6" ref="1">
    <original>S</original>
    <variation>P</variation>
    <location>
        <position position="1043"/>
    </location>
</feature>
<evidence type="ECO:0000255" key="1"/>
<evidence type="ECO:0000255" key="2">
    <source>
        <dbReference type="PROSITE-ProRule" id="PRU00037"/>
    </source>
</evidence>
<evidence type="ECO:0000256" key="3">
    <source>
        <dbReference type="SAM" id="MobiDB-lite"/>
    </source>
</evidence>
<evidence type="ECO:0000303" key="4">
    <source>
    </source>
</evidence>
<evidence type="ECO:0000303" key="5">
    <source>
    </source>
</evidence>
<evidence type="ECO:0000305" key="6"/>
<evidence type="ECO:0000312" key="7">
    <source>
        <dbReference type="HGNC" id="HGNC:23844"/>
    </source>
</evidence>
<gene>
    <name evidence="7" type="primary">ABTB3</name>
    <name type="synonym">BTBD11</name>
</gene>